<protein>
    <recommendedName>
        <fullName>Antimicrobial peptide 1</fullName>
    </recommendedName>
</protein>
<name>AMP1_MESCR</name>
<proteinExistence type="inferred from homology"/>
<reference key="1">
    <citation type="submission" date="1998-06" db="EMBL/GenBank/DDBJ databases">
        <title>Antimicrobial peptide 1 from the common ice plant.</title>
        <authorList>
            <person name="Michalowski C.B."/>
            <person name="Bohnert H.J."/>
        </authorList>
    </citation>
    <scope>NUCLEOTIDE SEQUENCE [MRNA]</scope>
</reference>
<organism>
    <name type="scientific">Mesembryanthemum crystallinum</name>
    <name type="common">Common ice plant</name>
    <name type="synonym">Cryophytum crystallinum</name>
    <dbReference type="NCBI Taxonomy" id="3544"/>
    <lineage>
        <taxon>Eukaryota</taxon>
        <taxon>Viridiplantae</taxon>
        <taxon>Streptophyta</taxon>
        <taxon>Embryophyta</taxon>
        <taxon>Tracheophyta</taxon>
        <taxon>Spermatophyta</taxon>
        <taxon>Magnoliopsida</taxon>
        <taxon>eudicotyledons</taxon>
        <taxon>Gunneridae</taxon>
        <taxon>Pentapetalae</taxon>
        <taxon>Caryophyllales</taxon>
        <taxon>Aizoaceae</taxon>
        <taxon>Mesembryanthemum</taxon>
        <taxon>Mesembryanthemum subgen. Cryophytum</taxon>
    </lineage>
</organism>
<keyword id="KW-0044">Antibiotic</keyword>
<keyword id="KW-0929">Antimicrobial</keyword>
<keyword id="KW-1015">Disulfide bond</keyword>
<keyword id="KW-0295">Fungicide</keyword>
<keyword id="KW-0960">Knottin</keyword>
<keyword id="KW-0611">Plant defense</keyword>
<keyword id="KW-0964">Secreted</keyword>
<keyword id="KW-0732">Signal</keyword>
<accession>O81338</accession>
<sequence>MAKVSSSLLKFAIVLILVLSMSAIISAKCIKNGKGCREDQGPPFCCSGFCYRQVGWARGYCKNR</sequence>
<feature type="signal peptide" evidence="2">
    <location>
        <begin position="1"/>
        <end position="26"/>
    </location>
</feature>
<feature type="chain" id="PRO_0000001309" description="Antimicrobial peptide 1">
    <location>
        <begin position="27"/>
        <end position="64"/>
    </location>
</feature>
<feature type="disulfide bond" evidence="1">
    <location>
        <begin position="29"/>
        <end position="46"/>
    </location>
</feature>
<feature type="disulfide bond" evidence="1">
    <location>
        <begin position="36"/>
        <end position="50"/>
    </location>
</feature>
<feature type="disulfide bond" evidence="1">
    <location>
        <begin position="45"/>
        <end position="61"/>
    </location>
</feature>
<dbReference type="EMBL" id="AF069321">
    <property type="protein sequence ID" value="AAC19399.1"/>
    <property type="molecule type" value="mRNA"/>
</dbReference>
<dbReference type="PIR" id="T12305">
    <property type="entry name" value="T12305"/>
</dbReference>
<dbReference type="SMR" id="O81338"/>
<dbReference type="GO" id="GO:0005576">
    <property type="term" value="C:extracellular region"/>
    <property type="evidence" value="ECO:0007669"/>
    <property type="project" value="UniProtKB-SubCell"/>
</dbReference>
<dbReference type="GO" id="GO:0042742">
    <property type="term" value="P:defense response to bacterium"/>
    <property type="evidence" value="ECO:0007669"/>
    <property type="project" value="UniProtKB-KW"/>
</dbReference>
<dbReference type="GO" id="GO:0050832">
    <property type="term" value="P:defense response to fungus"/>
    <property type="evidence" value="ECO:0007669"/>
    <property type="project" value="UniProtKB-KW"/>
</dbReference>
<dbReference type="GO" id="GO:0031640">
    <property type="term" value="P:killing of cells of another organism"/>
    <property type="evidence" value="ECO:0007669"/>
    <property type="project" value="UniProtKB-KW"/>
</dbReference>
<dbReference type="InterPro" id="IPR013006">
    <property type="entry name" value="Antimicrobial_C6_CS"/>
</dbReference>
<dbReference type="InterPro" id="IPR009101">
    <property type="entry name" value="Gurmarin/antifun_pep"/>
</dbReference>
<dbReference type="InterPro" id="IPR024206">
    <property type="entry name" value="Gurmarin/antimicrobial_peptd"/>
</dbReference>
<dbReference type="Pfam" id="PF11410">
    <property type="entry name" value="Antifungal_pept"/>
    <property type="match status" value="1"/>
</dbReference>
<dbReference type="SUPFAM" id="SSF57048">
    <property type="entry name" value="Gurmarin-like"/>
    <property type="match status" value="1"/>
</dbReference>
<dbReference type="PROSITE" id="PS60011">
    <property type="entry name" value="PLANT_C6_AMP"/>
    <property type="match status" value="1"/>
</dbReference>
<comment type="function">
    <text evidence="1">Possesses antifungal and antibacterial activity.</text>
</comment>
<comment type="subcellular location">
    <subcellularLocation>
        <location>Secreted</location>
    </subcellularLocation>
</comment>
<comment type="domain">
    <text evidence="1">The presence of a 'disulfide through disulfide knot' structurally defines this protein as a knottin.</text>
</comment>
<comment type="similarity">
    <text evidence="3">Belongs to the AMP family.</text>
</comment>
<evidence type="ECO:0000250" key="1"/>
<evidence type="ECO:0000255" key="2"/>
<evidence type="ECO:0000305" key="3"/>